<dbReference type="EC" id="4.3.3.7" evidence="1"/>
<dbReference type="EMBL" id="CU468135">
    <property type="protein sequence ID" value="CAO96112.1"/>
    <property type="molecule type" value="Genomic_DNA"/>
</dbReference>
<dbReference type="RefSeq" id="WP_012440812.1">
    <property type="nucleotide sequence ID" value="NC_010694.1"/>
</dbReference>
<dbReference type="SMR" id="B2VE56"/>
<dbReference type="STRING" id="465817.ETA_10660"/>
<dbReference type="KEGG" id="eta:ETA_10660"/>
<dbReference type="eggNOG" id="COG0329">
    <property type="taxonomic scope" value="Bacteria"/>
</dbReference>
<dbReference type="HOGENOM" id="CLU_049343_7_0_6"/>
<dbReference type="OrthoDB" id="9782828at2"/>
<dbReference type="UniPathway" id="UPA00034">
    <property type="reaction ID" value="UER00017"/>
</dbReference>
<dbReference type="Proteomes" id="UP000001726">
    <property type="component" value="Chromosome"/>
</dbReference>
<dbReference type="GO" id="GO:0005829">
    <property type="term" value="C:cytosol"/>
    <property type="evidence" value="ECO:0007669"/>
    <property type="project" value="TreeGrafter"/>
</dbReference>
<dbReference type="GO" id="GO:0008840">
    <property type="term" value="F:4-hydroxy-tetrahydrodipicolinate synthase activity"/>
    <property type="evidence" value="ECO:0007669"/>
    <property type="project" value="UniProtKB-UniRule"/>
</dbReference>
<dbReference type="GO" id="GO:0019877">
    <property type="term" value="P:diaminopimelate biosynthetic process"/>
    <property type="evidence" value="ECO:0007669"/>
    <property type="project" value="UniProtKB-UniRule"/>
</dbReference>
<dbReference type="GO" id="GO:0009089">
    <property type="term" value="P:lysine biosynthetic process via diaminopimelate"/>
    <property type="evidence" value="ECO:0007669"/>
    <property type="project" value="UniProtKB-UniRule"/>
</dbReference>
<dbReference type="CDD" id="cd00950">
    <property type="entry name" value="DHDPS"/>
    <property type="match status" value="1"/>
</dbReference>
<dbReference type="FunFam" id="3.20.20.70:FF:000046">
    <property type="entry name" value="4-hydroxy-tetrahydrodipicolinate synthase"/>
    <property type="match status" value="1"/>
</dbReference>
<dbReference type="Gene3D" id="3.20.20.70">
    <property type="entry name" value="Aldolase class I"/>
    <property type="match status" value="1"/>
</dbReference>
<dbReference type="HAMAP" id="MF_00418">
    <property type="entry name" value="DapA"/>
    <property type="match status" value="1"/>
</dbReference>
<dbReference type="InterPro" id="IPR013785">
    <property type="entry name" value="Aldolase_TIM"/>
</dbReference>
<dbReference type="InterPro" id="IPR005263">
    <property type="entry name" value="DapA"/>
</dbReference>
<dbReference type="InterPro" id="IPR002220">
    <property type="entry name" value="DapA-like"/>
</dbReference>
<dbReference type="InterPro" id="IPR020625">
    <property type="entry name" value="Schiff_base-form_aldolases_AS"/>
</dbReference>
<dbReference type="InterPro" id="IPR020624">
    <property type="entry name" value="Schiff_base-form_aldolases_CS"/>
</dbReference>
<dbReference type="NCBIfam" id="TIGR00674">
    <property type="entry name" value="dapA"/>
    <property type="match status" value="1"/>
</dbReference>
<dbReference type="PANTHER" id="PTHR12128:SF66">
    <property type="entry name" value="4-HYDROXY-2-OXOGLUTARATE ALDOLASE, MITOCHONDRIAL"/>
    <property type="match status" value="1"/>
</dbReference>
<dbReference type="PANTHER" id="PTHR12128">
    <property type="entry name" value="DIHYDRODIPICOLINATE SYNTHASE"/>
    <property type="match status" value="1"/>
</dbReference>
<dbReference type="Pfam" id="PF00701">
    <property type="entry name" value="DHDPS"/>
    <property type="match status" value="1"/>
</dbReference>
<dbReference type="PIRSF" id="PIRSF001365">
    <property type="entry name" value="DHDPS"/>
    <property type="match status" value="1"/>
</dbReference>
<dbReference type="PRINTS" id="PR00146">
    <property type="entry name" value="DHPICSNTHASE"/>
</dbReference>
<dbReference type="SMART" id="SM01130">
    <property type="entry name" value="DHDPS"/>
    <property type="match status" value="1"/>
</dbReference>
<dbReference type="SUPFAM" id="SSF51569">
    <property type="entry name" value="Aldolase"/>
    <property type="match status" value="1"/>
</dbReference>
<dbReference type="PROSITE" id="PS00665">
    <property type="entry name" value="DHDPS_1"/>
    <property type="match status" value="1"/>
</dbReference>
<dbReference type="PROSITE" id="PS00666">
    <property type="entry name" value="DHDPS_2"/>
    <property type="match status" value="1"/>
</dbReference>
<evidence type="ECO:0000255" key="1">
    <source>
        <dbReference type="HAMAP-Rule" id="MF_00418"/>
    </source>
</evidence>
<evidence type="ECO:0000305" key="2"/>
<name>DAPA_ERWT9</name>
<reference key="1">
    <citation type="journal article" date="2008" name="Environ. Microbiol.">
        <title>The genome of Erwinia tasmaniensis strain Et1/99, a non-pathogenic bacterium in the genus Erwinia.</title>
        <authorList>
            <person name="Kube M."/>
            <person name="Migdoll A.M."/>
            <person name="Mueller I."/>
            <person name="Kuhl H."/>
            <person name="Beck A."/>
            <person name="Reinhardt R."/>
            <person name="Geider K."/>
        </authorList>
    </citation>
    <scope>NUCLEOTIDE SEQUENCE [LARGE SCALE GENOMIC DNA]</scope>
    <source>
        <strain>DSM 17950 / CFBP 7177 / CIP 109463 / NCPPB 4357 / Et1/99</strain>
    </source>
</reference>
<protein>
    <recommendedName>
        <fullName evidence="1">4-hydroxy-tetrahydrodipicolinate synthase</fullName>
        <shortName evidence="1">HTPA synthase</shortName>
        <ecNumber evidence="1">4.3.3.7</ecNumber>
    </recommendedName>
</protein>
<accession>B2VE56</accession>
<feature type="chain" id="PRO_1000124033" description="4-hydroxy-tetrahydrodipicolinate synthase">
    <location>
        <begin position="1"/>
        <end position="292"/>
    </location>
</feature>
<feature type="active site" description="Proton donor/acceptor" evidence="1">
    <location>
        <position position="133"/>
    </location>
</feature>
<feature type="active site" description="Schiff-base intermediate with substrate" evidence="1">
    <location>
        <position position="161"/>
    </location>
</feature>
<feature type="binding site" evidence="1">
    <location>
        <position position="45"/>
    </location>
    <ligand>
        <name>pyruvate</name>
        <dbReference type="ChEBI" id="CHEBI:15361"/>
    </ligand>
</feature>
<feature type="binding site" evidence="1">
    <location>
        <position position="203"/>
    </location>
    <ligand>
        <name>pyruvate</name>
        <dbReference type="ChEBI" id="CHEBI:15361"/>
    </ligand>
</feature>
<feature type="site" description="Part of a proton relay during catalysis" evidence="1">
    <location>
        <position position="44"/>
    </location>
</feature>
<feature type="site" description="Part of a proton relay during catalysis" evidence="1">
    <location>
        <position position="107"/>
    </location>
</feature>
<comment type="function">
    <text evidence="1">Catalyzes the condensation of (S)-aspartate-beta-semialdehyde [(S)-ASA] and pyruvate to 4-hydroxy-tetrahydrodipicolinate (HTPA).</text>
</comment>
<comment type="catalytic activity">
    <reaction evidence="1">
        <text>L-aspartate 4-semialdehyde + pyruvate = (2S,4S)-4-hydroxy-2,3,4,5-tetrahydrodipicolinate + H2O + H(+)</text>
        <dbReference type="Rhea" id="RHEA:34171"/>
        <dbReference type="ChEBI" id="CHEBI:15361"/>
        <dbReference type="ChEBI" id="CHEBI:15377"/>
        <dbReference type="ChEBI" id="CHEBI:15378"/>
        <dbReference type="ChEBI" id="CHEBI:67139"/>
        <dbReference type="ChEBI" id="CHEBI:537519"/>
        <dbReference type="EC" id="4.3.3.7"/>
    </reaction>
</comment>
<comment type="pathway">
    <text evidence="1">Amino-acid biosynthesis; L-lysine biosynthesis via DAP pathway; (S)-tetrahydrodipicolinate from L-aspartate: step 3/4.</text>
</comment>
<comment type="subunit">
    <text evidence="1">Homotetramer; dimer of dimers.</text>
</comment>
<comment type="subcellular location">
    <subcellularLocation>
        <location evidence="1">Cytoplasm</location>
    </subcellularLocation>
</comment>
<comment type="similarity">
    <text evidence="1">Belongs to the DapA family.</text>
</comment>
<comment type="caution">
    <text evidence="2">Was originally thought to be a dihydrodipicolinate synthase (DHDPS), catalyzing the condensation of (S)-aspartate-beta-semialdehyde [(S)-ASA] and pyruvate to dihydrodipicolinate (DHDP). However, it was shown in E.coli that the product of the enzymatic reaction is not dihydrodipicolinate but in fact (4S)-4-hydroxy-2,3,4,5-tetrahydro-(2S)-dipicolinic acid (HTPA), and that the consecutive dehydration reaction leading to DHDP is not spontaneous but catalyzed by DapB.</text>
</comment>
<gene>
    <name evidence="1" type="primary">dapA</name>
    <name type="ordered locus">ETA_10660</name>
</gene>
<organism>
    <name type="scientific">Erwinia tasmaniensis (strain DSM 17950 / CFBP 7177 / CIP 109463 / NCPPB 4357 / Et1/99)</name>
    <dbReference type="NCBI Taxonomy" id="465817"/>
    <lineage>
        <taxon>Bacteria</taxon>
        <taxon>Pseudomonadati</taxon>
        <taxon>Pseudomonadota</taxon>
        <taxon>Gammaproteobacteria</taxon>
        <taxon>Enterobacterales</taxon>
        <taxon>Erwiniaceae</taxon>
        <taxon>Erwinia</taxon>
    </lineage>
</organism>
<sequence>MFTGSIVALVTPMDDKGNVCRASLKKLIDYHVASGTSAIVSVGTTGESATLSHDEHGDVVLLTLELADGRIPIIAGTGANATAEGVCLTKRFENSGVVGCLTVTPYYNRPTQEGLYQHFKTIAENTELPQMLYNVPSRTGTDLLPETVGRLAKIKNIIGIKEAIGNLSRVSQIQQLVNDDFVLVSGDDATSLDFMQLGGHGVISVTANIAAREMVELCALARQGNFAQARLLNQRLMHLHQKLFVEPNPIPVKWAAKRLGLIATDTLRLPMTPLTDAGCSVVEQALKDAALL</sequence>
<proteinExistence type="inferred from homology"/>
<keyword id="KW-0028">Amino-acid biosynthesis</keyword>
<keyword id="KW-0963">Cytoplasm</keyword>
<keyword id="KW-0220">Diaminopimelate biosynthesis</keyword>
<keyword id="KW-0456">Lyase</keyword>
<keyword id="KW-0457">Lysine biosynthesis</keyword>
<keyword id="KW-1185">Reference proteome</keyword>
<keyword id="KW-0704">Schiff base</keyword>